<keyword id="KW-0963">Cytoplasm</keyword>
<keyword id="KW-0275">Fatty acid biosynthesis</keyword>
<keyword id="KW-0276">Fatty acid metabolism</keyword>
<keyword id="KW-0444">Lipid biosynthesis</keyword>
<keyword id="KW-0443">Lipid metabolism</keyword>
<keyword id="KW-0596">Phosphopantetheine</keyword>
<keyword id="KW-0597">Phosphoprotein</keyword>
<keyword id="KW-1185">Reference proteome</keyword>
<gene>
    <name evidence="1" type="primary">acpP</name>
    <name type="ordered locus">WS0630</name>
</gene>
<reference key="1">
    <citation type="journal article" date="2003" name="Proc. Natl. Acad. Sci. U.S.A.">
        <title>Complete genome sequence and analysis of Wolinella succinogenes.</title>
        <authorList>
            <person name="Baar C."/>
            <person name="Eppinger M."/>
            <person name="Raddatz G."/>
            <person name="Simon J."/>
            <person name="Lanz C."/>
            <person name="Klimmek O."/>
            <person name="Nandakumar R."/>
            <person name="Gross R."/>
            <person name="Rosinus A."/>
            <person name="Keller H."/>
            <person name="Jagtap P."/>
            <person name="Linke B."/>
            <person name="Meyer F."/>
            <person name="Lederer H."/>
            <person name="Schuster S.C."/>
        </authorList>
    </citation>
    <scope>NUCLEOTIDE SEQUENCE [LARGE SCALE GENOMIC DNA]</scope>
    <source>
        <strain>ATCC 29543 / DSM 1740 / CCUG 13145 / JCM 31913 / LMG 7466 / NCTC 11488 / FDC 602W</strain>
    </source>
</reference>
<organism>
    <name type="scientific">Wolinella succinogenes (strain ATCC 29543 / DSM 1740 / CCUG 13145 / JCM 31913 / LMG 7466 / NCTC 11488 / FDC 602W)</name>
    <name type="common">Vibrio succinogenes</name>
    <dbReference type="NCBI Taxonomy" id="273121"/>
    <lineage>
        <taxon>Bacteria</taxon>
        <taxon>Pseudomonadati</taxon>
        <taxon>Campylobacterota</taxon>
        <taxon>Epsilonproteobacteria</taxon>
        <taxon>Campylobacterales</taxon>
        <taxon>Helicobacteraceae</taxon>
        <taxon>Wolinella</taxon>
    </lineage>
</organism>
<accession>Q7M9W1</accession>
<name>ACP_WOLSU</name>
<sequence>MAIFDDIKEVVVEQLNVNPEEVKEESKFVEDLGADSLDVVELVMALEEKFNIEIPDEEAEKIATVGDVVRYIETNK</sequence>
<dbReference type="EMBL" id="BX571658">
    <property type="protein sequence ID" value="CAE09761.1"/>
    <property type="molecule type" value="Genomic_DNA"/>
</dbReference>
<dbReference type="RefSeq" id="WP_011138561.1">
    <property type="nucleotide sequence ID" value="NC_005090.1"/>
</dbReference>
<dbReference type="SMR" id="Q7M9W1"/>
<dbReference type="STRING" id="273121.WS0630"/>
<dbReference type="KEGG" id="wsu:WS0630"/>
<dbReference type="eggNOG" id="COG0236">
    <property type="taxonomic scope" value="Bacteria"/>
</dbReference>
<dbReference type="HOGENOM" id="CLU_108696_5_1_7"/>
<dbReference type="UniPathway" id="UPA00094"/>
<dbReference type="Proteomes" id="UP000000422">
    <property type="component" value="Chromosome"/>
</dbReference>
<dbReference type="GO" id="GO:0005829">
    <property type="term" value="C:cytosol"/>
    <property type="evidence" value="ECO:0007669"/>
    <property type="project" value="TreeGrafter"/>
</dbReference>
<dbReference type="GO" id="GO:0016020">
    <property type="term" value="C:membrane"/>
    <property type="evidence" value="ECO:0007669"/>
    <property type="project" value="GOC"/>
</dbReference>
<dbReference type="GO" id="GO:0000035">
    <property type="term" value="F:acyl binding"/>
    <property type="evidence" value="ECO:0007669"/>
    <property type="project" value="TreeGrafter"/>
</dbReference>
<dbReference type="GO" id="GO:0000036">
    <property type="term" value="F:acyl carrier activity"/>
    <property type="evidence" value="ECO:0007669"/>
    <property type="project" value="UniProtKB-UniRule"/>
</dbReference>
<dbReference type="GO" id="GO:0009245">
    <property type="term" value="P:lipid A biosynthetic process"/>
    <property type="evidence" value="ECO:0007669"/>
    <property type="project" value="TreeGrafter"/>
</dbReference>
<dbReference type="FunFam" id="1.10.1200.10:FF:000006">
    <property type="entry name" value="Acyl carrier protein"/>
    <property type="match status" value="1"/>
</dbReference>
<dbReference type="Gene3D" id="1.10.1200.10">
    <property type="entry name" value="ACP-like"/>
    <property type="match status" value="1"/>
</dbReference>
<dbReference type="HAMAP" id="MF_01217">
    <property type="entry name" value="Acyl_carrier"/>
    <property type="match status" value="1"/>
</dbReference>
<dbReference type="InterPro" id="IPR003231">
    <property type="entry name" value="ACP"/>
</dbReference>
<dbReference type="InterPro" id="IPR036736">
    <property type="entry name" value="ACP-like_sf"/>
</dbReference>
<dbReference type="InterPro" id="IPR009081">
    <property type="entry name" value="PP-bd_ACP"/>
</dbReference>
<dbReference type="InterPro" id="IPR006162">
    <property type="entry name" value="Ppantetheine_attach_site"/>
</dbReference>
<dbReference type="NCBIfam" id="TIGR00517">
    <property type="entry name" value="acyl_carrier"/>
    <property type="match status" value="1"/>
</dbReference>
<dbReference type="NCBIfam" id="NF002148">
    <property type="entry name" value="PRK00982.1-2"/>
    <property type="match status" value="1"/>
</dbReference>
<dbReference type="NCBIfam" id="NF002149">
    <property type="entry name" value="PRK00982.1-3"/>
    <property type="match status" value="1"/>
</dbReference>
<dbReference type="NCBIfam" id="NF002150">
    <property type="entry name" value="PRK00982.1-4"/>
    <property type="match status" value="1"/>
</dbReference>
<dbReference type="NCBIfam" id="NF002151">
    <property type="entry name" value="PRK00982.1-5"/>
    <property type="match status" value="1"/>
</dbReference>
<dbReference type="PANTHER" id="PTHR20863">
    <property type="entry name" value="ACYL CARRIER PROTEIN"/>
    <property type="match status" value="1"/>
</dbReference>
<dbReference type="PANTHER" id="PTHR20863:SF76">
    <property type="entry name" value="CARRIER DOMAIN-CONTAINING PROTEIN"/>
    <property type="match status" value="1"/>
</dbReference>
<dbReference type="Pfam" id="PF00550">
    <property type="entry name" value="PP-binding"/>
    <property type="match status" value="1"/>
</dbReference>
<dbReference type="SUPFAM" id="SSF47336">
    <property type="entry name" value="ACP-like"/>
    <property type="match status" value="1"/>
</dbReference>
<dbReference type="PROSITE" id="PS50075">
    <property type="entry name" value="CARRIER"/>
    <property type="match status" value="1"/>
</dbReference>
<dbReference type="PROSITE" id="PS00012">
    <property type="entry name" value="PHOSPHOPANTETHEINE"/>
    <property type="match status" value="1"/>
</dbReference>
<comment type="function">
    <text evidence="1">Carrier of the growing fatty acid chain in fatty acid biosynthesis.</text>
</comment>
<comment type="pathway">
    <text evidence="1">Lipid metabolism; fatty acid biosynthesis.</text>
</comment>
<comment type="subcellular location">
    <subcellularLocation>
        <location evidence="1">Cytoplasm</location>
    </subcellularLocation>
</comment>
<comment type="PTM">
    <text evidence="1">4'-phosphopantetheine is transferred from CoA to a specific serine of apo-ACP by AcpS. This modification is essential for activity because fatty acids are bound in thioester linkage to the sulfhydryl of the prosthetic group.</text>
</comment>
<comment type="similarity">
    <text evidence="1">Belongs to the acyl carrier protein (ACP) family.</text>
</comment>
<feature type="chain" id="PRO_0000180220" description="Acyl carrier protein">
    <location>
        <begin position="1"/>
        <end position="76"/>
    </location>
</feature>
<feature type="domain" description="Carrier" evidence="2">
    <location>
        <begin position="1"/>
        <end position="76"/>
    </location>
</feature>
<feature type="modified residue" description="O-(pantetheine 4'-phosphoryl)serine" evidence="2">
    <location>
        <position position="36"/>
    </location>
</feature>
<protein>
    <recommendedName>
        <fullName evidence="1">Acyl carrier protein</fullName>
        <shortName evidence="1">ACP</shortName>
    </recommendedName>
</protein>
<evidence type="ECO:0000255" key="1">
    <source>
        <dbReference type="HAMAP-Rule" id="MF_01217"/>
    </source>
</evidence>
<evidence type="ECO:0000255" key="2">
    <source>
        <dbReference type="PROSITE-ProRule" id="PRU00258"/>
    </source>
</evidence>
<proteinExistence type="inferred from homology"/>